<keyword id="KW-1185">Reference proteome</keyword>
<organismHost>
    <name type="scientific">Microplitis demolitor</name>
    <name type="common">Parasitoid wasp</name>
    <dbReference type="NCBI Taxonomy" id="69319"/>
</organismHost>
<gene>
    <name type="primary">M5</name>
</gene>
<proteinExistence type="predicted"/>
<protein>
    <recommendedName>
        <fullName>Uncharacterized protein M5</fullName>
    </recommendedName>
</protein>
<dbReference type="EMBL" id="AY875688">
    <property type="protein sequence ID" value="AAW51801.1"/>
    <property type="molecule type" value="Genomic_DNA"/>
</dbReference>
<dbReference type="RefSeq" id="YP_239397.1">
    <property type="nucleotide sequence ID" value="NC_007038.1"/>
</dbReference>
<dbReference type="KEGG" id="vg:5075830"/>
<dbReference type="Proteomes" id="UP000008168">
    <property type="component" value="Genome"/>
</dbReference>
<reference key="1">
    <citation type="journal article" date="2006" name="Virology">
        <title>Polydnavirus genomes reflect their dual roles as mutualists and pathogens.</title>
        <authorList>
            <person name="Webb B.A."/>
            <person name="Strand M.R."/>
            <person name="Dickey S.E."/>
            <person name="Beck M.H."/>
            <person name="Hilgarth R.S."/>
            <person name="Barney W.E."/>
            <person name="Kadash K."/>
            <person name="Kroemer J.A."/>
            <person name="Lindstrom K.G."/>
            <person name="Rattanadechakul W."/>
            <person name="Shelby K.S."/>
            <person name="Thoetkiattikul H."/>
            <person name="Turnbull M.W."/>
            <person name="Witherell R.A."/>
        </authorList>
    </citation>
    <scope>NUCLEOTIDE SEQUENCE [GENOMIC DNA]</scope>
</reference>
<name>YM5_MDBVW</name>
<organism>
    <name type="scientific">Microplitis demolitor bracovirus (isolate Webb)</name>
    <name type="common">MdBV</name>
    <dbReference type="NCBI Taxonomy" id="654919"/>
    <lineage>
        <taxon>Viruses</taxon>
        <taxon>Viruses incertae sedis</taxon>
        <taxon>Polydnaviriformidae</taxon>
        <taxon>Bracoviriform</taxon>
        <taxon>Microplitis demolitor bracovirus</taxon>
    </lineage>
</organism>
<accession>Q5I131</accession>
<feature type="chain" id="PRO_0000405386" description="Uncharacterized protein M5">
    <location>
        <begin position="1"/>
        <end position="103"/>
    </location>
</feature>
<sequence>MVSWTITSGLLRQVKRYCVEYFSCFSSKYIIYLCFSFFQTETMQTYQYHVAKFAETHYDNLDKYVCVPDSWIRRRRKTKQKVSVVYFEGNRSRTKKRIKSNDN</sequence>